<name>RLMC_ECO27</name>
<dbReference type="EC" id="2.1.1.189" evidence="1"/>
<dbReference type="EMBL" id="FM180568">
    <property type="protein sequence ID" value="CAS08404.1"/>
    <property type="molecule type" value="Genomic_DNA"/>
</dbReference>
<dbReference type="RefSeq" id="WP_001149710.1">
    <property type="nucleotide sequence ID" value="NC_011601.1"/>
</dbReference>
<dbReference type="SMR" id="B7UMV1"/>
<dbReference type="KEGG" id="ecg:E2348C_0856"/>
<dbReference type="HOGENOM" id="CLU_014689_0_0_6"/>
<dbReference type="Proteomes" id="UP000008205">
    <property type="component" value="Chromosome"/>
</dbReference>
<dbReference type="GO" id="GO:0051539">
    <property type="term" value="F:4 iron, 4 sulfur cluster binding"/>
    <property type="evidence" value="ECO:0007669"/>
    <property type="project" value="UniProtKB-KW"/>
</dbReference>
<dbReference type="GO" id="GO:0005506">
    <property type="term" value="F:iron ion binding"/>
    <property type="evidence" value="ECO:0007669"/>
    <property type="project" value="UniProtKB-UniRule"/>
</dbReference>
<dbReference type="GO" id="GO:0070041">
    <property type="term" value="F:rRNA (uridine-C5-)-methyltransferase activity"/>
    <property type="evidence" value="ECO:0007669"/>
    <property type="project" value="UniProtKB-UniRule"/>
</dbReference>
<dbReference type="GO" id="GO:0070475">
    <property type="term" value="P:rRNA base methylation"/>
    <property type="evidence" value="ECO:0007669"/>
    <property type="project" value="TreeGrafter"/>
</dbReference>
<dbReference type="CDD" id="cd02440">
    <property type="entry name" value="AdoMet_MTases"/>
    <property type="match status" value="1"/>
</dbReference>
<dbReference type="FunFam" id="2.40.50.1070:FF:000002">
    <property type="entry name" value="23S rRNA (uracil(747)-C(5))-methyltransferase RlmC"/>
    <property type="match status" value="1"/>
</dbReference>
<dbReference type="FunFam" id="3.40.50.150:FF:000049">
    <property type="entry name" value="23S rRNA (uracil(747)-C(5))-methyltransferase RlmC"/>
    <property type="match status" value="1"/>
</dbReference>
<dbReference type="Gene3D" id="2.40.50.1070">
    <property type="match status" value="1"/>
</dbReference>
<dbReference type="Gene3D" id="3.40.50.150">
    <property type="entry name" value="Vaccinia Virus protein VP39"/>
    <property type="match status" value="1"/>
</dbReference>
<dbReference type="HAMAP" id="MF_01012">
    <property type="entry name" value="23SrRNA_methyltr_RlmC"/>
    <property type="match status" value="1"/>
</dbReference>
<dbReference type="InterPro" id="IPR011825">
    <property type="entry name" value="23SrRNA_MeTrfase_RlmC"/>
</dbReference>
<dbReference type="InterPro" id="IPR030390">
    <property type="entry name" value="MeTrfase_TrmA_AS"/>
</dbReference>
<dbReference type="InterPro" id="IPR030391">
    <property type="entry name" value="MeTrfase_TrmA_CS"/>
</dbReference>
<dbReference type="InterPro" id="IPR029063">
    <property type="entry name" value="SAM-dependent_MTases_sf"/>
</dbReference>
<dbReference type="InterPro" id="IPR010280">
    <property type="entry name" value="U5_MeTrfase_fam"/>
</dbReference>
<dbReference type="NCBIfam" id="TIGR02085">
    <property type="entry name" value="meth_trns_rumB"/>
    <property type="match status" value="1"/>
</dbReference>
<dbReference type="PANTHER" id="PTHR11061">
    <property type="entry name" value="RNA M5U METHYLTRANSFERASE"/>
    <property type="match status" value="1"/>
</dbReference>
<dbReference type="PANTHER" id="PTHR11061:SF30">
    <property type="entry name" value="TRNA (URACIL(54)-C(5))-METHYLTRANSFERASE"/>
    <property type="match status" value="1"/>
</dbReference>
<dbReference type="Pfam" id="PF05958">
    <property type="entry name" value="tRNA_U5-meth_tr"/>
    <property type="match status" value="1"/>
</dbReference>
<dbReference type="SUPFAM" id="SSF53335">
    <property type="entry name" value="S-adenosyl-L-methionine-dependent methyltransferases"/>
    <property type="match status" value="1"/>
</dbReference>
<dbReference type="PROSITE" id="PS51687">
    <property type="entry name" value="SAM_MT_RNA_M5U"/>
    <property type="match status" value="1"/>
</dbReference>
<dbReference type="PROSITE" id="PS01230">
    <property type="entry name" value="TRMA_1"/>
    <property type="match status" value="1"/>
</dbReference>
<dbReference type="PROSITE" id="PS01231">
    <property type="entry name" value="TRMA_2"/>
    <property type="match status" value="1"/>
</dbReference>
<comment type="function">
    <text evidence="1">Catalyzes the formation of 5-methyl-uridine at position 747 (m5U747) in 23S rRNA.</text>
</comment>
<comment type="catalytic activity">
    <reaction evidence="1">
        <text>uridine(747) in 23S rRNA + S-adenosyl-L-methionine = 5-methyluridine(747) in 23S rRNA + S-adenosyl-L-homocysteine + H(+)</text>
        <dbReference type="Rhea" id="RHEA:42628"/>
        <dbReference type="Rhea" id="RHEA-COMP:10154"/>
        <dbReference type="Rhea" id="RHEA-COMP:10155"/>
        <dbReference type="ChEBI" id="CHEBI:15378"/>
        <dbReference type="ChEBI" id="CHEBI:57856"/>
        <dbReference type="ChEBI" id="CHEBI:59789"/>
        <dbReference type="ChEBI" id="CHEBI:65315"/>
        <dbReference type="ChEBI" id="CHEBI:74447"/>
        <dbReference type="EC" id="2.1.1.189"/>
    </reaction>
</comment>
<comment type="similarity">
    <text evidence="1">Belongs to the class I-like SAM-binding methyltransferase superfamily. RNA M5U methyltransferase family. RlmC subfamily.</text>
</comment>
<reference key="1">
    <citation type="journal article" date="2009" name="J. Bacteriol.">
        <title>Complete genome sequence and comparative genome analysis of enteropathogenic Escherichia coli O127:H6 strain E2348/69.</title>
        <authorList>
            <person name="Iguchi A."/>
            <person name="Thomson N.R."/>
            <person name="Ogura Y."/>
            <person name="Saunders D."/>
            <person name="Ooka T."/>
            <person name="Henderson I.R."/>
            <person name="Harris D."/>
            <person name="Asadulghani M."/>
            <person name="Kurokawa K."/>
            <person name="Dean P."/>
            <person name="Kenny B."/>
            <person name="Quail M.A."/>
            <person name="Thurston S."/>
            <person name="Dougan G."/>
            <person name="Hayashi T."/>
            <person name="Parkhill J."/>
            <person name="Frankel G."/>
        </authorList>
    </citation>
    <scope>NUCLEOTIDE SEQUENCE [LARGE SCALE GENOMIC DNA]</scope>
    <source>
        <strain>E2348/69 / EPEC</strain>
    </source>
</reference>
<gene>
    <name evidence="1" type="primary">rlmC</name>
    <name type="synonym">rumB</name>
    <name type="ordered locus">E2348C_0856</name>
</gene>
<sequence length="375" mass="41943">MQCALYDAGRCRSCQWITQPIPEQLSAKTADLKNLLADFPVEEWCAPVSGPEQGFRNKAKMVVSGSVEKPLLGMLHRDGTPEDLCDCPLYPASFAPVFAALKPFIARAGLTPYNVARKRGELKYILLTESQSDGGMMLRFVLRSDTKLAQLRKALPWLQEQLPQLKVITVNIQPVHMAIMEGETEIYLTEQQALAERFNDVPLWIRPQSFFQTNPAVASQLYATARDWVRQLPVKHMWDLFCGVGGFGLHCATPDMQLTGIEIAPEAIACAKQSAAELGLTRLQFQALDSTQFASAQGEVPELVLVNPPRRGIGKPLCDYLSTMAPRFIIYSSCNAQTMAKDIRELPGYRIERVQLFDMFPHTAHYEVLTLLVKQ</sequence>
<proteinExistence type="inferred from homology"/>
<accession>B7UMV1</accession>
<organism>
    <name type="scientific">Escherichia coli O127:H6 (strain E2348/69 / EPEC)</name>
    <dbReference type="NCBI Taxonomy" id="574521"/>
    <lineage>
        <taxon>Bacteria</taxon>
        <taxon>Pseudomonadati</taxon>
        <taxon>Pseudomonadota</taxon>
        <taxon>Gammaproteobacteria</taxon>
        <taxon>Enterobacterales</taxon>
        <taxon>Enterobacteriaceae</taxon>
        <taxon>Escherichia</taxon>
    </lineage>
</organism>
<keyword id="KW-0004">4Fe-4S</keyword>
<keyword id="KW-0408">Iron</keyword>
<keyword id="KW-0411">Iron-sulfur</keyword>
<keyword id="KW-0479">Metal-binding</keyword>
<keyword id="KW-0489">Methyltransferase</keyword>
<keyword id="KW-1185">Reference proteome</keyword>
<keyword id="KW-0698">rRNA processing</keyword>
<keyword id="KW-0949">S-adenosyl-L-methionine</keyword>
<keyword id="KW-0808">Transferase</keyword>
<evidence type="ECO:0000255" key="1">
    <source>
        <dbReference type="HAMAP-Rule" id="MF_01012"/>
    </source>
</evidence>
<feature type="chain" id="PRO_1000148893" description="23S rRNA (uracil(747)-C(5))-methyltransferase RlmC">
    <location>
        <begin position="1"/>
        <end position="375"/>
    </location>
</feature>
<feature type="active site" description="Nucleophile" evidence="1">
    <location>
        <position position="334"/>
    </location>
</feature>
<feature type="binding site" evidence="1">
    <location>
        <position position="3"/>
    </location>
    <ligand>
        <name>[4Fe-4S] cluster</name>
        <dbReference type="ChEBI" id="CHEBI:49883"/>
    </ligand>
</feature>
<feature type="binding site" evidence="1">
    <location>
        <position position="11"/>
    </location>
    <ligand>
        <name>[4Fe-4S] cluster</name>
        <dbReference type="ChEBI" id="CHEBI:49883"/>
    </ligand>
</feature>
<feature type="binding site" evidence="1">
    <location>
        <position position="14"/>
    </location>
    <ligand>
        <name>[4Fe-4S] cluster</name>
        <dbReference type="ChEBI" id="CHEBI:49883"/>
    </ligand>
</feature>
<feature type="binding site" evidence="1">
    <location>
        <position position="87"/>
    </location>
    <ligand>
        <name>[4Fe-4S] cluster</name>
        <dbReference type="ChEBI" id="CHEBI:49883"/>
    </ligand>
</feature>
<feature type="binding site" evidence="1">
    <location>
        <position position="212"/>
    </location>
    <ligand>
        <name>S-adenosyl-L-methionine</name>
        <dbReference type="ChEBI" id="CHEBI:59789"/>
    </ligand>
</feature>
<feature type="binding site" evidence="1">
    <location>
        <position position="241"/>
    </location>
    <ligand>
        <name>S-adenosyl-L-methionine</name>
        <dbReference type="ChEBI" id="CHEBI:59789"/>
    </ligand>
</feature>
<feature type="binding site" evidence="1">
    <location>
        <position position="262"/>
    </location>
    <ligand>
        <name>S-adenosyl-L-methionine</name>
        <dbReference type="ChEBI" id="CHEBI:59789"/>
    </ligand>
</feature>
<feature type="binding site" evidence="1">
    <location>
        <position position="307"/>
    </location>
    <ligand>
        <name>S-adenosyl-L-methionine</name>
        <dbReference type="ChEBI" id="CHEBI:59789"/>
    </ligand>
</feature>
<protein>
    <recommendedName>
        <fullName evidence="1">23S rRNA (uracil(747)-C(5))-methyltransferase RlmC</fullName>
        <ecNumber evidence="1">2.1.1.189</ecNumber>
    </recommendedName>
    <alternativeName>
        <fullName evidence="1">23S rRNA(m5U747)-methyltransferase</fullName>
    </alternativeName>
</protein>